<name>RM16_MAIZE</name>
<proteinExistence type="inferred from homology"/>
<organism>
    <name type="scientific">Zea mays</name>
    <name type="common">Maize</name>
    <dbReference type="NCBI Taxonomy" id="4577"/>
    <lineage>
        <taxon>Eukaryota</taxon>
        <taxon>Viridiplantae</taxon>
        <taxon>Streptophyta</taxon>
        <taxon>Embryophyta</taxon>
        <taxon>Tracheophyta</taxon>
        <taxon>Spermatophyta</taxon>
        <taxon>Magnoliopsida</taxon>
        <taxon>Liliopsida</taxon>
        <taxon>Poales</taxon>
        <taxon>Poaceae</taxon>
        <taxon>PACMAD clade</taxon>
        <taxon>Panicoideae</taxon>
        <taxon>Andropogonodae</taxon>
        <taxon>Andropogoneae</taxon>
        <taxon>Tripsacinae</taxon>
        <taxon>Zea</taxon>
    </lineage>
</organism>
<gene>
    <name type="primary">RPL16</name>
</gene>
<dbReference type="EMBL" id="X57445">
    <property type="protein sequence ID" value="CAA40691.1"/>
    <property type="molecule type" value="Genomic_DNA"/>
</dbReference>
<dbReference type="PIR" id="S15026">
    <property type="entry name" value="R5ZM6M"/>
</dbReference>
<dbReference type="SMR" id="P27927"/>
<dbReference type="PaxDb" id="4577-GRMZM2G062165_P01"/>
<dbReference type="MaizeGDB" id="69578"/>
<dbReference type="eggNOG" id="KOG3422">
    <property type="taxonomic scope" value="Eukaryota"/>
</dbReference>
<dbReference type="HOGENOM" id="CLU_078858_3_0_1"/>
<dbReference type="OrthoDB" id="732122at2759"/>
<dbReference type="GO" id="GO:0005762">
    <property type="term" value="C:mitochondrial large ribosomal subunit"/>
    <property type="evidence" value="ECO:0000318"/>
    <property type="project" value="GO_Central"/>
</dbReference>
<dbReference type="GO" id="GO:0019843">
    <property type="term" value="F:rRNA binding"/>
    <property type="evidence" value="ECO:0000318"/>
    <property type="project" value="GO_Central"/>
</dbReference>
<dbReference type="GO" id="GO:0003735">
    <property type="term" value="F:structural constituent of ribosome"/>
    <property type="evidence" value="ECO:0000318"/>
    <property type="project" value="GO_Central"/>
</dbReference>
<dbReference type="GO" id="GO:0032543">
    <property type="term" value="P:mitochondrial translation"/>
    <property type="evidence" value="ECO:0000318"/>
    <property type="project" value="GO_Central"/>
</dbReference>
<dbReference type="CDD" id="cd01433">
    <property type="entry name" value="Ribosomal_L16_L10e"/>
    <property type="match status" value="1"/>
</dbReference>
<dbReference type="FunFam" id="3.90.1170.10:FF:000007">
    <property type="entry name" value="Ribosomal protein L16"/>
    <property type="match status" value="1"/>
</dbReference>
<dbReference type="Gene3D" id="3.90.1170.10">
    <property type="entry name" value="Ribosomal protein L10e/L16"/>
    <property type="match status" value="1"/>
</dbReference>
<dbReference type="InterPro" id="IPR047873">
    <property type="entry name" value="Ribosomal_uL16"/>
</dbReference>
<dbReference type="InterPro" id="IPR000114">
    <property type="entry name" value="Ribosomal_uL16_bact-type"/>
</dbReference>
<dbReference type="InterPro" id="IPR020798">
    <property type="entry name" value="Ribosomal_uL16_CS"/>
</dbReference>
<dbReference type="InterPro" id="IPR016180">
    <property type="entry name" value="Ribosomal_uL16_dom"/>
</dbReference>
<dbReference type="InterPro" id="IPR036920">
    <property type="entry name" value="Ribosomal_uL16_sf"/>
</dbReference>
<dbReference type="NCBIfam" id="TIGR01164">
    <property type="entry name" value="rplP_bact"/>
    <property type="match status" value="1"/>
</dbReference>
<dbReference type="PANTHER" id="PTHR12220">
    <property type="entry name" value="50S/60S RIBOSOMAL PROTEIN L16"/>
    <property type="match status" value="1"/>
</dbReference>
<dbReference type="PANTHER" id="PTHR12220:SF24">
    <property type="entry name" value="LARGE RIBOSOMAL SUBUNIT PROTEIN UL16M"/>
    <property type="match status" value="1"/>
</dbReference>
<dbReference type="Pfam" id="PF00252">
    <property type="entry name" value="Ribosomal_L16"/>
    <property type="match status" value="1"/>
</dbReference>
<dbReference type="PRINTS" id="PR00060">
    <property type="entry name" value="RIBOSOMALL16"/>
</dbReference>
<dbReference type="SUPFAM" id="SSF54686">
    <property type="entry name" value="Ribosomal protein L16p/L10e"/>
    <property type="match status" value="1"/>
</dbReference>
<dbReference type="PROSITE" id="PS00586">
    <property type="entry name" value="RIBOSOMAL_L16_1"/>
    <property type="match status" value="1"/>
</dbReference>
<dbReference type="PROSITE" id="PS00701">
    <property type="entry name" value="RIBOSOMAL_L16_2"/>
    <property type="match status" value="1"/>
</dbReference>
<protein>
    <recommendedName>
        <fullName evidence="1">Large ribosomal subunit protein uL16m</fullName>
    </recommendedName>
    <alternativeName>
        <fullName>60S ribosomal protein L16, mitochondrial</fullName>
    </alternativeName>
</protein>
<comment type="subcellular location">
    <subcellularLocation>
        <location>Mitochondrion</location>
    </subcellularLocation>
</comment>
<comment type="similarity">
    <text evidence="1">Belongs to the universal ribosomal protein uL16 family.</text>
</comment>
<geneLocation type="mitochondrion"/>
<reference key="1">
    <citation type="journal article" date="1991" name="EMBO J.">
        <title>The NCS3 mutation: genetic evidence for the expression of ribosomal protein genes in Zea mays mitochondria.</title>
        <authorList>
            <person name="Hunt M.D."/>
            <person name="Newton K.J."/>
        </authorList>
    </citation>
    <scope>NUCLEOTIDE SEQUENCE [GENOMIC DNA]</scope>
</reference>
<sequence>MEKHLVMYLTRKSIMLLRKYLLVTEFQVSKCGSHIVKIRRDVLYPKRTKYSKYSKCRCSRGREPDGTQLGFGRYGTKSSRAGRLSYRAIEAARRATIGQFRRAMSGQFRRNCKIWVRVLADLPITGKPAEVRMGRGKGNPTGWIARVSTGQIPFEMDGVSLSNARQAARLAAHKPCSSTKFVQWS</sequence>
<feature type="chain" id="PRO_0000062324" description="Large ribosomal subunit protein uL16m">
    <location>
        <begin position="1"/>
        <end position="185"/>
    </location>
</feature>
<keyword id="KW-0496">Mitochondrion</keyword>
<keyword id="KW-0687">Ribonucleoprotein</keyword>
<keyword id="KW-0689">Ribosomal protein</keyword>
<evidence type="ECO:0000305" key="1"/>
<accession>P27927</accession>